<gene>
    <name evidence="1" type="primary">slyX</name>
    <name type="ordered locus">STY4344</name>
    <name type="ordered locus">t4051</name>
</gene>
<reference key="1">
    <citation type="journal article" date="2001" name="Nature">
        <title>Complete genome sequence of a multiple drug resistant Salmonella enterica serovar Typhi CT18.</title>
        <authorList>
            <person name="Parkhill J."/>
            <person name="Dougan G."/>
            <person name="James K.D."/>
            <person name="Thomson N.R."/>
            <person name="Pickard D."/>
            <person name="Wain J."/>
            <person name="Churcher C.M."/>
            <person name="Mungall K.L."/>
            <person name="Bentley S.D."/>
            <person name="Holden M.T.G."/>
            <person name="Sebaihia M."/>
            <person name="Baker S."/>
            <person name="Basham D."/>
            <person name="Brooks K."/>
            <person name="Chillingworth T."/>
            <person name="Connerton P."/>
            <person name="Cronin A."/>
            <person name="Davis P."/>
            <person name="Davies R.M."/>
            <person name="Dowd L."/>
            <person name="White N."/>
            <person name="Farrar J."/>
            <person name="Feltwell T."/>
            <person name="Hamlin N."/>
            <person name="Haque A."/>
            <person name="Hien T.T."/>
            <person name="Holroyd S."/>
            <person name="Jagels K."/>
            <person name="Krogh A."/>
            <person name="Larsen T.S."/>
            <person name="Leather S."/>
            <person name="Moule S."/>
            <person name="O'Gaora P."/>
            <person name="Parry C."/>
            <person name="Quail M.A."/>
            <person name="Rutherford K.M."/>
            <person name="Simmonds M."/>
            <person name="Skelton J."/>
            <person name="Stevens K."/>
            <person name="Whitehead S."/>
            <person name="Barrell B.G."/>
        </authorList>
    </citation>
    <scope>NUCLEOTIDE SEQUENCE [LARGE SCALE GENOMIC DNA]</scope>
    <source>
        <strain>CT18</strain>
    </source>
</reference>
<reference key="2">
    <citation type="journal article" date="2003" name="J. Bacteriol.">
        <title>Comparative genomics of Salmonella enterica serovar Typhi strains Ty2 and CT18.</title>
        <authorList>
            <person name="Deng W."/>
            <person name="Liou S.-R."/>
            <person name="Plunkett G. III"/>
            <person name="Mayhew G.F."/>
            <person name="Rose D.J."/>
            <person name="Burland V."/>
            <person name="Kodoyianni V."/>
            <person name="Schwartz D.C."/>
            <person name="Blattner F.R."/>
        </authorList>
    </citation>
    <scope>NUCLEOTIDE SEQUENCE [LARGE SCALE GENOMIC DNA]</scope>
    <source>
        <strain>ATCC 700931 / Ty2</strain>
    </source>
</reference>
<organism>
    <name type="scientific">Salmonella typhi</name>
    <dbReference type="NCBI Taxonomy" id="90370"/>
    <lineage>
        <taxon>Bacteria</taxon>
        <taxon>Pseudomonadati</taxon>
        <taxon>Pseudomonadota</taxon>
        <taxon>Gammaproteobacteria</taxon>
        <taxon>Enterobacterales</taxon>
        <taxon>Enterobacteriaceae</taxon>
        <taxon>Salmonella</taxon>
    </lineage>
</organism>
<dbReference type="EMBL" id="AL513382">
    <property type="protein sequence ID" value="CAD08159.1"/>
    <property type="molecule type" value="Genomic_DNA"/>
</dbReference>
<dbReference type="EMBL" id="AE014613">
    <property type="protein sequence ID" value="AAO71518.1"/>
    <property type="molecule type" value="Genomic_DNA"/>
</dbReference>
<dbReference type="RefSeq" id="NP_458446.1">
    <property type="nucleotide sequence ID" value="NC_003198.1"/>
</dbReference>
<dbReference type="RefSeq" id="WP_001152702.1">
    <property type="nucleotide sequence ID" value="NZ_WSUR01000001.1"/>
</dbReference>
<dbReference type="SMR" id="Q8Z1Y5"/>
<dbReference type="STRING" id="220341.gene:17588172"/>
<dbReference type="KEGG" id="stt:t4051"/>
<dbReference type="KEGG" id="sty:STY4344"/>
<dbReference type="PATRIC" id="fig|220341.7.peg.4439"/>
<dbReference type="eggNOG" id="COG2900">
    <property type="taxonomic scope" value="Bacteria"/>
</dbReference>
<dbReference type="HOGENOM" id="CLU_180796_4_2_6"/>
<dbReference type="OMA" id="CQLAFQE"/>
<dbReference type="OrthoDB" id="5771733at2"/>
<dbReference type="Proteomes" id="UP000000541">
    <property type="component" value="Chromosome"/>
</dbReference>
<dbReference type="Proteomes" id="UP000002670">
    <property type="component" value="Chromosome"/>
</dbReference>
<dbReference type="Gene3D" id="1.20.5.300">
    <property type="match status" value="1"/>
</dbReference>
<dbReference type="HAMAP" id="MF_00715">
    <property type="entry name" value="SlyX"/>
    <property type="match status" value="1"/>
</dbReference>
<dbReference type="InterPro" id="IPR007236">
    <property type="entry name" value="SlyX"/>
</dbReference>
<dbReference type="NCBIfam" id="NF002750">
    <property type="entry name" value="PRK02793.1"/>
    <property type="match status" value="1"/>
</dbReference>
<dbReference type="PANTHER" id="PTHR36508">
    <property type="entry name" value="PROTEIN SLYX"/>
    <property type="match status" value="1"/>
</dbReference>
<dbReference type="PANTHER" id="PTHR36508:SF1">
    <property type="entry name" value="PROTEIN SLYX"/>
    <property type="match status" value="1"/>
</dbReference>
<dbReference type="Pfam" id="PF04102">
    <property type="entry name" value="SlyX"/>
    <property type="match status" value="1"/>
</dbReference>
<feature type="chain" id="PRO_0000209212" description="Protein SlyX">
    <location>
        <begin position="1"/>
        <end position="72"/>
    </location>
</feature>
<feature type="region of interest" description="Disordered" evidence="2">
    <location>
        <begin position="53"/>
        <end position="72"/>
    </location>
</feature>
<feature type="compositionally biased region" description="Polar residues" evidence="2">
    <location>
        <begin position="55"/>
        <end position="65"/>
    </location>
</feature>
<protein>
    <recommendedName>
        <fullName evidence="1">Protein SlyX</fullName>
    </recommendedName>
</protein>
<accession>Q8Z1Y5</accession>
<sequence>MQDITMEARLAELESRLAFQEITIEELNLTVTAHEMEMAKLRNHLRLLTEKLKASQPSNIASQAEETPPPHY</sequence>
<proteinExistence type="inferred from homology"/>
<comment type="similarity">
    <text evidence="1">Belongs to the SlyX family.</text>
</comment>
<evidence type="ECO:0000255" key="1">
    <source>
        <dbReference type="HAMAP-Rule" id="MF_00715"/>
    </source>
</evidence>
<evidence type="ECO:0000256" key="2">
    <source>
        <dbReference type="SAM" id="MobiDB-lite"/>
    </source>
</evidence>
<name>SLYX_SALTI</name>